<dbReference type="EC" id="6.3.2.-" evidence="1"/>
<dbReference type="EMBL" id="CU928161">
    <property type="protein sequence ID" value="CAR05893.1"/>
    <property type="molecule type" value="Genomic_DNA"/>
</dbReference>
<dbReference type="RefSeq" id="WP_000004771.1">
    <property type="nucleotide sequence ID" value="NC_011742.1"/>
</dbReference>
<dbReference type="SMR" id="B7MKW2"/>
<dbReference type="GeneID" id="93777667"/>
<dbReference type="KEGG" id="ecz:ECS88_4743"/>
<dbReference type="HOGENOM" id="CLU_008255_1_1_6"/>
<dbReference type="Proteomes" id="UP000000747">
    <property type="component" value="Chromosome"/>
</dbReference>
<dbReference type="GO" id="GO:0005829">
    <property type="term" value="C:cytosol"/>
    <property type="evidence" value="ECO:0007669"/>
    <property type="project" value="TreeGrafter"/>
</dbReference>
<dbReference type="GO" id="GO:0016880">
    <property type="term" value="F:acid-ammonia (or amide) ligase activity"/>
    <property type="evidence" value="ECO:0007669"/>
    <property type="project" value="UniProtKB-UniRule"/>
</dbReference>
<dbReference type="GO" id="GO:0005524">
    <property type="term" value="F:ATP binding"/>
    <property type="evidence" value="ECO:0007669"/>
    <property type="project" value="UniProtKB-UniRule"/>
</dbReference>
<dbReference type="GO" id="GO:0004824">
    <property type="term" value="F:lysine-tRNA ligase activity"/>
    <property type="evidence" value="ECO:0007669"/>
    <property type="project" value="InterPro"/>
</dbReference>
<dbReference type="GO" id="GO:0000049">
    <property type="term" value="F:tRNA binding"/>
    <property type="evidence" value="ECO:0007669"/>
    <property type="project" value="TreeGrafter"/>
</dbReference>
<dbReference type="GO" id="GO:0006430">
    <property type="term" value="P:lysyl-tRNA aminoacylation"/>
    <property type="evidence" value="ECO:0007669"/>
    <property type="project" value="InterPro"/>
</dbReference>
<dbReference type="FunFam" id="3.30.930.10:FF:000017">
    <property type="entry name" value="Elongation factor P--(R)-beta-lysine ligase"/>
    <property type="match status" value="1"/>
</dbReference>
<dbReference type="Gene3D" id="3.30.930.10">
    <property type="entry name" value="Bira Bifunctional Protein, Domain 2"/>
    <property type="match status" value="1"/>
</dbReference>
<dbReference type="HAMAP" id="MF_00174">
    <property type="entry name" value="EF_P_modif_A"/>
    <property type="match status" value="1"/>
</dbReference>
<dbReference type="InterPro" id="IPR004364">
    <property type="entry name" value="Aa-tRNA-synt_II"/>
</dbReference>
<dbReference type="InterPro" id="IPR006195">
    <property type="entry name" value="aa-tRNA-synth_II"/>
</dbReference>
<dbReference type="InterPro" id="IPR045864">
    <property type="entry name" value="aa-tRNA-synth_II/BPL/LPL"/>
</dbReference>
<dbReference type="InterPro" id="IPR004525">
    <property type="entry name" value="EpmA"/>
</dbReference>
<dbReference type="InterPro" id="IPR018149">
    <property type="entry name" value="Lys-tRNA-synth_II_C"/>
</dbReference>
<dbReference type="NCBIfam" id="TIGR00462">
    <property type="entry name" value="genX"/>
    <property type="match status" value="1"/>
</dbReference>
<dbReference type="NCBIfam" id="NF006828">
    <property type="entry name" value="PRK09350.1"/>
    <property type="match status" value="1"/>
</dbReference>
<dbReference type="PANTHER" id="PTHR42918:SF6">
    <property type="entry name" value="ELONGATION FACTOR P--(R)-BETA-LYSINE LIGASE"/>
    <property type="match status" value="1"/>
</dbReference>
<dbReference type="PANTHER" id="PTHR42918">
    <property type="entry name" value="LYSYL-TRNA SYNTHETASE"/>
    <property type="match status" value="1"/>
</dbReference>
<dbReference type="Pfam" id="PF00152">
    <property type="entry name" value="tRNA-synt_2"/>
    <property type="match status" value="1"/>
</dbReference>
<dbReference type="PRINTS" id="PR00982">
    <property type="entry name" value="TRNASYNTHLYS"/>
</dbReference>
<dbReference type="SUPFAM" id="SSF55681">
    <property type="entry name" value="Class II aaRS and biotin synthetases"/>
    <property type="match status" value="1"/>
</dbReference>
<dbReference type="PROSITE" id="PS50862">
    <property type="entry name" value="AA_TRNA_LIGASE_II"/>
    <property type="match status" value="1"/>
</dbReference>
<evidence type="ECO:0000255" key="1">
    <source>
        <dbReference type="HAMAP-Rule" id="MF_00174"/>
    </source>
</evidence>
<feature type="chain" id="PRO_1000199258" description="Elongation factor P--(R)-beta-lysine ligase">
    <location>
        <begin position="1"/>
        <end position="325"/>
    </location>
</feature>
<feature type="binding site" evidence="1">
    <location>
        <begin position="76"/>
        <end position="78"/>
    </location>
    <ligand>
        <name>substrate</name>
    </ligand>
</feature>
<feature type="binding site" evidence="1">
    <location>
        <begin position="100"/>
        <end position="102"/>
    </location>
    <ligand>
        <name>ATP</name>
        <dbReference type="ChEBI" id="CHEBI:30616"/>
    </ligand>
</feature>
<feature type="binding site" evidence="1">
    <location>
        <position position="109"/>
    </location>
    <ligand>
        <name>ATP</name>
        <dbReference type="ChEBI" id="CHEBI:30616"/>
    </ligand>
</feature>
<feature type="binding site" evidence="1">
    <location>
        <position position="118"/>
    </location>
    <ligand>
        <name>substrate</name>
    </ligand>
</feature>
<feature type="binding site" evidence="1">
    <location>
        <begin position="244"/>
        <end position="245"/>
    </location>
    <ligand>
        <name>ATP</name>
        <dbReference type="ChEBI" id="CHEBI:30616"/>
    </ligand>
</feature>
<feature type="binding site" evidence="1">
    <location>
        <position position="251"/>
    </location>
    <ligand>
        <name>substrate</name>
    </ligand>
</feature>
<feature type="binding site" evidence="1">
    <location>
        <position position="300"/>
    </location>
    <ligand>
        <name>ATP</name>
        <dbReference type="ChEBI" id="CHEBI:30616"/>
    </ligand>
</feature>
<name>EPMA_ECO45</name>
<gene>
    <name evidence="1" type="primary">epmA</name>
    <name type="synonym">yjeA</name>
    <name type="ordered locus">ECS88_4743</name>
</gene>
<keyword id="KW-0067">ATP-binding</keyword>
<keyword id="KW-0436">Ligase</keyword>
<keyword id="KW-0547">Nucleotide-binding</keyword>
<keyword id="KW-1185">Reference proteome</keyword>
<organism>
    <name type="scientific">Escherichia coli O45:K1 (strain S88 / ExPEC)</name>
    <dbReference type="NCBI Taxonomy" id="585035"/>
    <lineage>
        <taxon>Bacteria</taxon>
        <taxon>Pseudomonadati</taxon>
        <taxon>Pseudomonadota</taxon>
        <taxon>Gammaproteobacteria</taxon>
        <taxon>Enterobacterales</taxon>
        <taxon>Enterobacteriaceae</taxon>
        <taxon>Escherichia</taxon>
    </lineage>
</organism>
<accession>B7MKW2</accession>
<sequence>MSETASWQPSASIPNLLKRAAIMAEIRRFFADRGVLEVETPCMSQATVTDIHLVPFETRFVGPGHSQGMNLWLMTSPEYHMKRLLVAGCGPVFQLCRSFRNEEMGRYHNPEFTMLEWYRPHYDMYRLMNEVDDLLQQVLDCPAAESLSYQQAFLRYLEIDPLSADKTQLREVAAKLDLSNVADTEEDRDTLLQLLFTFGVEPNIGKEKPTFVYHFPASQASLAQISTEDHRVAERFEVYYKGIELANGFHELTDAREQQQRFEQDNRKRAARGLPQHPIDQNLIEALKVGMPDCSGVALGVDRLVMLALGAETLAEVIAFSVDRA</sequence>
<comment type="function">
    <text evidence="1">With EpmB is involved in the beta-lysylation step of the post-translational modification of translation elongation factor P (EF-P) on 'Lys-34'. Catalyzes the ATP-dependent activation of (R)-beta-lysine produced by EpmB, forming a lysyl-adenylate, from which the beta-lysyl moiety is then transferred to the epsilon-amino group of EF-P 'Lys-34'.</text>
</comment>
<comment type="catalytic activity">
    <reaction evidence="1">
        <text>D-beta-lysine + L-lysyl-[protein] + ATP = N(6)-((3R)-3,6-diaminohexanoyl)-L-lysyl-[protein] + AMP + diphosphate + H(+)</text>
        <dbReference type="Rhea" id="RHEA:83435"/>
        <dbReference type="Rhea" id="RHEA-COMP:9752"/>
        <dbReference type="Rhea" id="RHEA-COMP:20131"/>
        <dbReference type="ChEBI" id="CHEBI:15378"/>
        <dbReference type="ChEBI" id="CHEBI:29969"/>
        <dbReference type="ChEBI" id="CHEBI:30616"/>
        <dbReference type="ChEBI" id="CHEBI:33019"/>
        <dbReference type="ChEBI" id="CHEBI:84138"/>
        <dbReference type="ChEBI" id="CHEBI:156053"/>
        <dbReference type="ChEBI" id="CHEBI:456215"/>
    </reaction>
    <physiologicalReaction direction="left-to-right" evidence="1">
        <dbReference type="Rhea" id="RHEA:83436"/>
    </physiologicalReaction>
</comment>
<comment type="subunit">
    <text evidence="1">Homodimer.</text>
</comment>
<comment type="similarity">
    <text evidence="1">Belongs to the class-II aminoacyl-tRNA synthetase family. EpmA subfamily.</text>
</comment>
<proteinExistence type="inferred from homology"/>
<protein>
    <recommendedName>
        <fullName evidence="1">Elongation factor P--(R)-beta-lysine ligase</fullName>
        <shortName evidence="1">EF-P--(R)-beta-lysine ligase</shortName>
        <ecNumber evidence="1">6.3.2.-</ecNumber>
    </recommendedName>
    <alternativeName>
        <fullName evidence="1">EF-P post-translational modification enzyme A</fullName>
    </alternativeName>
    <alternativeName>
        <fullName evidence="1">EF-P-lysine lysyltransferase</fullName>
    </alternativeName>
</protein>
<reference key="1">
    <citation type="journal article" date="2009" name="PLoS Genet.">
        <title>Organised genome dynamics in the Escherichia coli species results in highly diverse adaptive paths.</title>
        <authorList>
            <person name="Touchon M."/>
            <person name="Hoede C."/>
            <person name="Tenaillon O."/>
            <person name="Barbe V."/>
            <person name="Baeriswyl S."/>
            <person name="Bidet P."/>
            <person name="Bingen E."/>
            <person name="Bonacorsi S."/>
            <person name="Bouchier C."/>
            <person name="Bouvet O."/>
            <person name="Calteau A."/>
            <person name="Chiapello H."/>
            <person name="Clermont O."/>
            <person name="Cruveiller S."/>
            <person name="Danchin A."/>
            <person name="Diard M."/>
            <person name="Dossat C."/>
            <person name="Karoui M.E."/>
            <person name="Frapy E."/>
            <person name="Garry L."/>
            <person name="Ghigo J.M."/>
            <person name="Gilles A.M."/>
            <person name="Johnson J."/>
            <person name="Le Bouguenec C."/>
            <person name="Lescat M."/>
            <person name="Mangenot S."/>
            <person name="Martinez-Jehanne V."/>
            <person name="Matic I."/>
            <person name="Nassif X."/>
            <person name="Oztas S."/>
            <person name="Petit M.A."/>
            <person name="Pichon C."/>
            <person name="Rouy Z."/>
            <person name="Ruf C.S."/>
            <person name="Schneider D."/>
            <person name="Tourret J."/>
            <person name="Vacherie B."/>
            <person name="Vallenet D."/>
            <person name="Medigue C."/>
            <person name="Rocha E.P.C."/>
            <person name="Denamur E."/>
        </authorList>
    </citation>
    <scope>NUCLEOTIDE SEQUENCE [LARGE SCALE GENOMIC DNA]</scope>
    <source>
        <strain>S88 / ExPEC</strain>
    </source>
</reference>